<organism>
    <name type="scientific">Escherichia coli (strain SMS-3-5 / SECEC)</name>
    <dbReference type="NCBI Taxonomy" id="439855"/>
    <lineage>
        <taxon>Bacteria</taxon>
        <taxon>Pseudomonadati</taxon>
        <taxon>Pseudomonadota</taxon>
        <taxon>Gammaproteobacteria</taxon>
        <taxon>Enterobacterales</taxon>
        <taxon>Enterobacteriaceae</taxon>
        <taxon>Escherichia</taxon>
    </lineage>
</organism>
<proteinExistence type="inferred from homology"/>
<evidence type="ECO:0000255" key="1">
    <source>
        <dbReference type="HAMAP-Rule" id="MF_00456"/>
    </source>
</evidence>
<comment type="function">
    <text evidence="1">Catalyzes the transfer of a phosphate group to glutamate to form L-glutamate 5-phosphate.</text>
</comment>
<comment type="catalytic activity">
    <reaction evidence="1">
        <text>L-glutamate + ATP = L-glutamyl 5-phosphate + ADP</text>
        <dbReference type="Rhea" id="RHEA:14877"/>
        <dbReference type="ChEBI" id="CHEBI:29985"/>
        <dbReference type="ChEBI" id="CHEBI:30616"/>
        <dbReference type="ChEBI" id="CHEBI:58274"/>
        <dbReference type="ChEBI" id="CHEBI:456216"/>
        <dbReference type="EC" id="2.7.2.11"/>
    </reaction>
</comment>
<comment type="pathway">
    <text evidence="1">Amino-acid biosynthesis; L-proline biosynthesis; L-glutamate 5-semialdehyde from L-glutamate: step 1/2.</text>
</comment>
<comment type="subcellular location">
    <subcellularLocation>
        <location evidence="1">Cytoplasm</location>
    </subcellularLocation>
</comment>
<comment type="similarity">
    <text evidence="1">Belongs to the glutamate 5-kinase family.</text>
</comment>
<protein>
    <recommendedName>
        <fullName evidence="1">Glutamate 5-kinase</fullName>
        <ecNumber evidence="1">2.7.2.11</ecNumber>
    </recommendedName>
    <alternativeName>
        <fullName evidence="1">Gamma-glutamyl kinase</fullName>
        <shortName evidence="1">GK</shortName>
    </alternativeName>
</protein>
<sequence>MSDSQTLVVKLGTSVLTGGSRRLNRAHIVELVRQCAQLHAAGHRIVIVTSGAIAAGREHLGYPELPATIASKQLLAAVGQSRLIQLWEQLFSIYGIHVGQMLLTRADMEDRERFLNARDTLRALLDNNIVPVINENDAVATAEIKVGDNDNLSALAAILAGADKLLLLTDQKGLYTADPRSNPQAELIKDVYGIDDALRAIAGDSVSGLGTGGMSTKLQAADVACRAGIDTIIAAGSKPGVIGDVMEGISVGTLFHAQATPLENRKRWIFGAPPAGEITVDEGATAAILERGSSLLPKGIKSVTGNFSRGEVIRICNLEGRDIAHGVSRYNSDALRRIAGHHSQEIDAILGYEYGPVAVHRDDMITR</sequence>
<name>PROB_ECOSM</name>
<accession>B1LHT8</accession>
<gene>
    <name evidence="1" type="primary">proB</name>
    <name type="ordered locus">EcSMS35_0296</name>
</gene>
<reference key="1">
    <citation type="journal article" date="2008" name="J. Bacteriol.">
        <title>Insights into the environmental resistance gene pool from the genome sequence of the multidrug-resistant environmental isolate Escherichia coli SMS-3-5.</title>
        <authorList>
            <person name="Fricke W.F."/>
            <person name="Wright M.S."/>
            <person name="Lindell A.H."/>
            <person name="Harkins D.M."/>
            <person name="Baker-Austin C."/>
            <person name="Ravel J."/>
            <person name="Stepanauskas R."/>
        </authorList>
    </citation>
    <scope>NUCLEOTIDE SEQUENCE [LARGE SCALE GENOMIC DNA]</scope>
    <source>
        <strain>SMS-3-5 / SECEC</strain>
    </source>
</reference>
<keyword id="KW-0028">Amino-acid biosynthesis</keyword>
<keyword id="KW-0067">ATP-binding</keyword>
<keyword id="KW-0963">Cytoplasm</keyword>
<keyword id="KW-0418">Kinase</keyword>
<keyword id="KW-0547">Nucleotide-binding</keyword>
<keyword id="KW-0641">Proline biosynthesis</keyword>
<keyword id="KW-0808">Transferase</keyword>
<dbReference type="EC" id="2.7.2.11" evidence="1"/>
<dbReference type="EMBL" id="CP000970">
    <property type="protein sequence ID" value="ACB17866.1"/>
    <property type="molecule type" value="Genomic_DNA"/>
</dbReference>
<dbReference type="RefSeq" id="WP_001285288.1">
    <property type="nucleotide sequence ID" value="NC_010498.1"/>
</dbReference>
<dbReference type="SMR" id="B1LHT8"/>
<dbReference type="GeneID" id="93777151"/>
<dbReference type="KEGG" id="ecm:EcSMS35_0296"/>
<dbReference type="HOGENOM" id="CLU_025400_2_0_6"/>
<dbReference type="UniPathway" id="UPA00098">
    <property type="reaction ID" value="UER00359"/>
</dbReference>
<dbReference type="Proteomes" id="UP000007011">
    <property type="component" value="Chromosome"/>
</dbReference>
<dbReference type="GO" id="GO:0005829">
    <property type="term" value="C:cytosol"/>
    <property type="evidence" value="ECO:0007669"/>
    <property type="project" value="TreeGrafter"/>
</dbReference>
<dbReference type="GO" id="GO:0005524">
    <property type="term" value="F:ATP binding"/>
    <property type="evidence" value="ECO:0007669"/>
    <property type="project" value="UniProtKB-KW"/>
</dbReference>
<dbReference type="GO" id="GO:0004349">
    <property type="term" value="F:glutamate 5-kinase activity"/>
    <property type="evidence" value="ECO:0007669"/>
    <property type="project" value="UniProtKB-UniRule"/>
</dbReference>
<dbReference type="GO" id="GO:0003723">
    <property type="term" value="F:RNA binding"/>
    <property type="evidence" value="ECO:0007669"/>
    <property type="project" value="InterPro"/>
</dbReference>
<dbReference type="GO" id="GO:0055129">
    <property type="term" value="P:L-proline biosynthetic process"/>
    <property type="evidence" value="ECO:0007669"/>
    <property type="project" value="UniProtKB-UniRule"/>
</dbReference>
<dbReference type="CDD" id="cd04242">
    <property type="entry name" value="AAK_G5K_ProB"/>
    <property type="match status" value="1"/>
</dbReference>
<dbReference type="CDD" id="cd21157">
    <property type="entry name" value="PUA_G5K"/>
    <property type="match status" value="1"/>
</dbReference>
<dbReference type="FunFam" id="2.30.130.10:FF:000003">
    <property type="entry name" value="Glutamate 5-kinase"/>
    <property type="match status" value="1"/>
</dbReference>
<dbReference type="FunFam" id="3.40.1160.10:FF:000006">
    <property type="entry name" value="Glutamate 5-kinase"/>
    <property type="match status" value="1"/>
</dbReference>
<dbReference type="Gene3D" id="3.40.1160.10">
    <property type="entry name" value="Acetylglutamate kinase-like"/>
    <property type="match status" value="2"/>
</dbReference>
<dbReference type="Gene3D" id="2.30.130.10">
    <property type="entry name" value="PUA domain"/>
    <property type="match status" value="1"/>
</dbReference>
<dbReference type="HAMAP" id="MF_00456">
    <property type="entry name" value="ProB"/>
    <property type="match status" value="1"/>
</dbReference>
<dbReference type="InterPro" id="IPR036393">
    <property type="entry name" value="AceGlu_kinase-like_sf"/>
</dbReference>
<dbReference type="InterPro" id="IPR001048">
    <property type="entry name" value="Asp/Glu/Uridylate_kinase"/>
</dbReference>
<dbReference type="InterPro" id="IPR041739">
    <property type="entry name" value="G5K_ProB"/>
</dbReference>
<dbReference type="InterPro" id="IPR001057">
    <property type="entry name" value="Glu/AcGlu_kinase"/>
</dbReference>
<dbReference type="InterPro" id="IPR011529">
    <property type="entry name" value="Glu_5kinase"/>
</dbReference>
<dbReference type="InterPro" id="IPR005715">
    <property type="entry name" value="Glu_5kinase/COase_Synthase"/>
</dbReference>
<dbReference type="InterPro" id="IPR019797">
    <property type="entry name" value="Glutamate_5-kinase_CS"/>
</dbReference>
<dbReference type="InterPro" id="IPR002478">
    <property type="entry name" value="PUA"/>
</dbReference>
<dbReference type="InterPro" id="IPR015947">
    <property type="entry name" value="PUA-like_sf"/>
</dbReference>
<dbReference type="InterPro" id="IPR036974">
    <property type="entry name" value="PUA_sf"/>
</dbReference>
<dbReference type="NCBIfam" id="TIGR01027">
    <property type="entry name" value="proB"/>
    <property type="match status" value="1"/>
</dbReference>
<dbReference type="PANTHER" id="PTHR43654">
    <property type="entry name" value="GLUTAMATE 5-KINASE"/>
    <property type="match status" value="1"/>
</dbReference>
<dbReference type="PANTHER" id="PTHR43654:SF1">
    <property type="entry name" value="ISOPENTENYL PHOSPHATE KINASE"/>
    <property type="match status" value="1"/>
</dbReference>
<dbReference type="Pfam" id="PF00696">
    <property type="entry name" value="AA_kinase"/>
    <property type="match status" value="1"/>
</dbReference>
<dbReference type="Pfam" id="PF01472">
    <property type="entry name" value="PUA"/>
    <property type="match status" value="1"/>
</dbReference>
<dbReference type="PIRSF" id="PIRSF000729">
    <property type="entry name" value="GK"/>
    <property type="match status" value="1"/>
</dbReference>
<dbReference type="PRINTS" id="PR00474">
    <property type="entry name" value="GLU5KINASE"/>
</dbReference>
<dbReference type="SMART" id="SM00359">
    <property type="entry name" value="PUA"/>
    <property type="match status" value="1"/>
</dbReference>
<dbReference type="SUPFAM" id="SSF53633">
    <property type="entry name" value="Carbamate kinase-like"/>
    <property type="match status" value="1"/>
</dbReference>
<dbReference type="SUPFAM" id="SSF88697">
    <property type="entry name" value="PUA domain-like"/>
    <property type="match status" value="1"/>
</dbReference>
<dbReference type="PROSITE" id="PS00902">
    <property type="entry name" value="GLUTAMATE_5_KINASE"/>
    <property type="match status" value="1"/>
</dbReference>
<dbReference type="PROSITE" id="PS50890">
    <property type="entry name" value="PUA"/>
    <property type="match status" value="1"/>
</dbReference>
<feature type="chain" id="PRO_1000125235" description="Glutamate 5-kinase">
    <location>
        <begin position="1"/>
        <end position="367"/>
    </location>
</feature>
<feature type="domain" description="PUA" evidence="1">
    <location>
        <begin position="275"/>
        <end position="353"/>
    </location>
</feature>
<feature type="binding site" evidence="1">
    <location>
        <position position="10"/>
    </location>
    <ligand>
        <name>ATP</name>
        <dbReference type="ChEBI" id="CHEBI:30616"/>
    </ligand>
</feature>
<feature type="binding site" evidence="1">
    <location>
        <position position="50"/>
    </location>
    <ligand>
        <name>substrate</name>
    </ligand>
</feature>
<feature type="binding site" evidence="1">
    <location>
        <position position="137"/>
    </location>
    <ligand>
        <name>substrate</name>
    </ligand>
</feature>
<feature type="binding site" evidence="1">
    <location>
        <position position="149"/>
    </location>
    <ligand>
        <name>substrate</name>
    </ligand>
</feature>
<feature type="binding site" evidence="1">
    <location>
        <begin position="169"/>
        <end position="170"/>
    </location>
    <ligand>
        <name>ATP</name>
        <dbReference type="ChEBI" id="CHEBI:30616"/>
    </ligand>
</feature>
<feature type="binding site" evidence="1">
    <location>
        <begin position="211"/>
        <end position="217"/>
    </location>
    <ligand>
        <name>ATP</name>
        <dbReference type="ChEBI" id="CHEBI:30616"/>
    </ligand>
</feature>